<gene>
    <name evidence="1" type="primary">atpB</name>
    <name type="ordered locus">APP7_1714</name>
</gene>
<organism>
    <name type="scientific">Actinobacillus pleuropneumoniae serotype 7 (strain AP76)</name>
    <dbReference type="NCBI Taxonomy" id="537457"/>
    <lineage>
        <taxon>Bacteria</taxon>
        <taxon>Pseudomonadati</taxon>
        <taxon>Pseudomonadota</taxon>
        <taxon>Gammaproteobacteria</taxon>
        <taxon>Pasteurellales</taxon>
        <taxon>Pasteurellaceae</taxon>
        <taxon>Actinobacillus</taxon>
    </lineage>
</organism>
<feature type="chain" id="PRO_0000362225" description="ATP synthase subunit a">
    <location>
        <begin position="1"/>
        <end position="262"/>
    </location>
</feature>
<feature type="transmembrane region" description="Helical" evidence="1">
    <location>
        <begin position="24"/>
        <end position="44"/>
    </location>
</feature>
<feature type="transmembrane region" description="Helical" evidence="1">
    <location>
        <begin position="84"/>
        <end position="104"/>
    </location>
</feature>
<feature type="transmembrane region" description="Helical" evidence="1">
    <location>
        <begin position="129"/>
        <end position="149"/>
    </location>
</feature>
<feature type="transmembrane region" description="Helical" evidence="1">
    <location>
        <begin position="165"/>
        <end position="185"/>
    </location>
</feature>
<feature type="transmembrane region" description="Helical" evidence="1">
    <location>
        <begin position="194"/>
        <end position="214"/>
    </location>
</feature>
<feature type="transmembrane region" description="Helical" evidence="1">
    <location>
        <begin position="228"/>
        <end position="248"/>
    </location>
</feature>
<protein>
    <recommendedName>
        <fullName evidence="1">ATP synthase subunit a</fullName>
    </recommendedName>
    <alternativeName>
        <fullName evidence="1">ATP synthase F0 sector subunit a</fullName>
    </alternativeName>
    <alternativeName>
        <fullName evidence="1">F-ATPase subunit 6</fullName>
    </alternativeName>
</protein>
<reference key="1">
    <citation type="submission" date="2008-06" db="EMBL/GenBank/DDBJ databases">
        <title>Genome and proteome analysis of A. pleuropneumoniae serotype 7.</title>
        <authorList>
            <person name="Linke B."/>
            <person name="Buettner F."/>
            <person name="Martinez-Arias R."/>
            <person name="Goesmann A."/>
            <person name="Baltes N."/>
            <person name="Tegetmeyer H."/>
            <person name="Singh M."/>
            <person name="Gerlach G.F."/>
        </authorList>
    </citation>
    <scope>NUCLEOTIDE SEQUENCE [LARGE SCALE GENOMIC DNA]</scope>
    <source>
        <strain>AP76</strain>
    </source>
</reference>
<comment type="function">
    <text evidence="1">Key component of the proton channel; it plays a direct role in the translocation of protons across the membrane.</text>
</comment>
<comment type="subunit">
    <text evidence="1">F-type ATPases have 2 components, CF(1) - the catalytic core - and CF(0) - the membrane proton channel. CF(1) has five subunits: alpha(3), beta(3), gamma(1), delta(1), epsilon(1). CF(0) has three main subunits: a(1), b(2) and c(9-12). The alpha and beta chains form an alternating ring which encloses part of the gamma chain. CF(1) is attached to CF(0) by a central stalk formed by the gamma and epsilon chains, while a peripheral stalk is formed by the delta and b chains.</text>
</comment>
<comment type="subcellular location">
    <subcellularLocation>
        <location evidence="1">Cell inner membrane</location>
        <topology evidence="1">Multi-pass membrane protein</topology>
    </subcellularLocation>
</comment>
<comment type="similarity">
    <text evidence="1">Belongs to the ATPase A chain family.</text>
</comment>
<name>ATP6_ACTP7</name>
<proteinExistence type="inferred from homology"/>
<evidence type="ECO:0000255" key="1">
    <source>
        <dbReference type="HAMAP-Rule" id="MF_01393"/>
    </source>
</evidence>
<sequence length="262" mass="29234">MAGTTAEYISHHLSFLASGDGFWAVHLDTLFFSLLAGVIFLFVFSRVAKNATSGVPGKLQCFVEIVIGWVDGLVKDNFHGPRNVIAPLALTIFCWVFIMNAIDLVPVDFLPQLANMFGIHYLRAVPTADISATLGMSICVFFLILFYTVKSKGFGGLVKEYTLHPFNHWVFIPVNFILETVTLLAKPISLAFRLFGNMYAGELIFILIAVMYMADNFALQALGIPLHLVWAIFHILVITLQAFIFMMLTIVYLSIAYNKADH</sequence>
<dbReference type="EMBL" id="CP001091">
    <property type="protein sequence ID" value="ACE62366.1"/>
    <property type="molecule type" value="Genomic_DNA"/>
</dbReference>
<dbReference type="RefSeq" id="WP_005605648.1">
    <property type="nucleotide sequence ID" value="NC_010939.1"/>
</dbReference>
<dbReference type="SMR" id="B3H2P9"/>
<dbReference type="KEGG" id="apa:APP7_1714"/>
<dbReference type="HOGENOM" id="CLU_041018_1_0_6"/>
<dbReference type="Proteomes" id="UP000001226">
    <property type="component" value="Chromosome"/>
</dbReference>
<dbReference type="GO" id="GO:0005886">
    <property type="term" value="C:plasma membrane"/>
    <property type="evidence" value="ECO:0007669"/>
    <property type="project" value="UniProtKB-SubCell"/>
</dbReference>
<dbReference type="GO" id="GO:0045259">
    <property type="term" value="C:proton-transporting ATP synthase complex"/>
    <property type="evidence" value="ECO:0007669"/>
    <property type="project" value="UniProtKB-KW"/>
</dbReference>
<dbReference type="GO" id="GO:0046933">
    <property type="term" value="F:proton-transporting ATP synthase activity, rotational mechanism"/>
    <property type="evidence" value="ECO:0007669"/>
    <property type="project" value="UniProtKB-UniRule"/>
</dbReference>
<dbReference type="GO" id="GO:0042777">
    <property type="term" value="P:proton motive force-driven plasma membrane ATP synthesis"/>
    <property type="evidence" value="ECO:0007669"/>
    <property type="project" value="TreeGrafter"/>
</dbReference>
<dbReference type="CDD" id="cd00310">
    <property type="entry name" value="ATP-synt_Fo_a_6"/>
    <property type="match status" value="1"/>
</dbReference>
<dbReference type="FunFam" id="1.20.120.220:FF:000002">
    <property type="entry name" value="ATP synthase subunit a"/>
    <property type="match status" value="1"/>
</dbReference>
<dbReference type="Gene3D" id="1.20.120.220">
    <property type="entry name" value="ATP synthase, F0 complex, subunit A"/>
    <property type="match status" value="1"/>
</dbReference>
<dbReference type="HAMAP" id="MF_01393">
    <property type="entry name" value="ATP_synth_a_bact"/>
    <property type="match status" value="1"/>
</dbReference>
<dbReference type="InterPro" id="IPR045082">
    <property type="entry name" value="ATP_syn_F0_a_bact/chloroplast"/>
</dbReference>
<dbReference type="InterPro" id="IPR000568">
    <property type="entry name" value="ATP_synth_F0_asu"/>
</dbReference>
<dbReference type="InterPro" id="IPR023011">
    <property type="entry name" value="ATP_synth_F0_asu_AS"/>
</dbReference>
<dbReference type="InterPro" id="IPR035908">
    <property type="entry name" value="F0_ATP_A_sf"/>
</dbReference>
<dbReference type="NCBIfam" id="TIGR01131">
    <property type="entry name" value="ATP_synt_6_or_A"/>
    <property type="match status" value="1"/>
</dbReference>
<dbReference type="NCBIfam" id="NF004477">
    <property type="entry name" value="PRK05815.1-1"/>
    <property type="match status" value="1"/>
</dbReference>
<dbReference type="PANTHER" id="PTHR42823">
    <property type="entry name" value="ATP SYNTHASE SUBUNIT A, CHLOROPLASTIC"/>
    <property type="match status" value="1"/>
</dbReference>
<dbReference type="PANTHER" id="PTHR42823:SF3">
    <property type="entry name" value="ATP SYNTHASE SUBUNIT A, CHLOROPLASTIC"/>
    <property type="match status" value="1"/>
</dbReference>
<dbReference type="Pfam" id="PF00119">
    <property type="entry name" value="ATP-synt_A"/>
    <property type="match status" value="1"/>
</dbReference>
<dbReference type="PRINTS" id="PR00123">
    <property type="entry name" value="ATPASEA"/>
</dbReference>
<dbReference type="SUPFAM" id="SSF81336">
    <property type="entry name" value="F1F0 ATP synthase subunit A"/>
    <property type="match status" value="1"/>
</dbReference>
<dbReference type="PROSITE" id="PS00449">
    <property type="entry name" value="ATPASE_A"/>
    <property type="match status" value="1"/>
</dbReference>
<accession>B3H2P9</accession>
<keyword id="KW-0066">ATP synthesis</keyword>
<keyword id="KW-0997">Cell inner membrane</keyword>
<keyword id="KW-1003">Cell membrane</keyword>
<keyword id="KW-0138">CF(0)</keyword>
<keyword id="KW-0375">Hydrogen ion transport</keyword>
<keyword id="KW-0406">Ion transport</keyword>
<keyword id="KW-0472">Membrane</keyword>
<keyword id="KW-0812">Transmembrane</keyword>
<keyword id="KW-1133">Transmembrane helix</keyword>
<keyword id="KW-0813">Transport</keyword>